<proteinExistence type="inferred from homology"/>
<sequence>KNKCQLPSDVGKGKASFTRYFYNEESGKCETFIYGGMGGNSNNFLTKEACCRECAQGSC</sequence>
<comment type="function">
    <text evidence="3">Serine protease inhibitor that inhibits trypsin at a molar ratio of 1:1 (Ki=124 nM).</text>
</comment>
<comment type="subcellular location">
    <subcellularLocation>
        <location evidence="6">Secreted</location>
    </subcellularLocation>
</comment>
<comment type="tissue specificity">
    <text evidence="6">Expressed by the venom gland.</text>
</comment>
<comment type="miscellaneous">
    <text evidence="6">Negative results: has no effect on chymotrypsin and elastase. Shows weak inhibitory activity against mKv1.3/KCNA3 potassium channel (inhibits 50% of currents at 1 uM).</text>
</comment>
<comment type="similarity">
    <text evidence="5">Belongs to the venom Kunitz-type family. Scorpion delta-Ktx subfamily. Delta-Ktx 2 sub-subfamily.</text>
</comment>
<protein>
    <recommendedName>
        <fullName evidence="4">Kunitz-type serine protease inhibitor LmKTT-1c</fullName>
    </recommendedName>
    <alternativeName>
        <fullName>Delta-KTx 2.3</fullName>
    </alternativeName>
</protein>
<keyword id="KW-1015">Disulfide bond</keyword>
<keyword id="KW-0872">Ion channel impairing toxin</keyword>
<keyword id="KW-0632">Potassium channel impairing toxin</keyword>
<keyword id="KW-0646">Protease inhibitor</keyword>
<keyword id="KW-0964">Secreted</keyword>
<keyword id="KW-0722">Serine protease inhibitor</keyword>
<keyword id="KW-0800">Toxin</keyword>
<keyword id="KW-1220">Voltage-gated potassium channel impairing toxin</keyword>
<dbReference type="SMR" id="P0DJ48"/>
<dbReference type="GO" id="GO:0005576">
    <property type="term" value="C:extracellular region"/>
    <property type="evidence" value="ECO:0000303"/>
    <property type="project" value="UniProtKB"/>
</dbReference>
<dbReference type="GO" id="GO:0005615">
    <property type="term" value="C:extracellular space"/>
    <property type="evidence" value="ECO:0007669"/>
    <property type="project" value="TreeGrafter"/>
</dbReference>
<dbReference type="GO" id="GO:0033644">
    <property type="term" value="C:host cell membrane"/>
    <property type="evidence" value="ECO:0000303"/>
    <property type="project" value="UniProtKB"/>
</dbReference>
<dbReference type="GO" id="GO:0015459">
    <property type="term" value="F:potassium channel regulator activity"/>
    <property type="evidence" value="ECO:0007669"/>
    <property type="project" value="UniProtKB-KW"/>
</dbReference>
<dbReference type="GO" id="GO:0004867">
    <property type="term" value="F:serine-type endopeptidase inhibitor activity"/>
    <property type="evidence" value="ECO:0000314"/>
    <property type="project" value="UniProtKB"/>
</dbReference>
<dbReference type="GO" id="GO:0090729">
    <property type="term" value="F:toxin activity"/>
    <property type="evidence" value="ECO:0007669"/>
    <property type="project" value="UniProtKB-KW"/>
</dbReference>
<dbReference type="GO" id="GO:0044562">
    <property type="term" value="P:envenomation resulting in negative regulation of voltage-gated potassium channel activity in another organism"/>
    <property type="evidence" value="ECO:0000314"/>
    <property type="project" value="UniProtKB"/>
</dbReference>
<dbReference type="Gene3D" id="4.10.410.10">
    <property type="entry name" value="Pancreatic trypsin inhibitor Kunitz domain"/>
    <property type="match status" value="1"/>
</dbReference>
<dbReference type="InterPro" id="IPR002223">
    <property type="entry name" value="Kunitz_BPTI"/>
</dbReference>
<dbReference type="InterPro" id="IPR036880">
    <property type="entry name" value="Kunitz_BPTI_sf"/>
</dbReference>
<dbReference type="InterPro" id="IPR050098">
    <property type="entry name" value="TFPI/VKTCI-like"/>
</dbReference>
<dbReference type="PANTHER" id="PTHR10083:SF374">
    <property type="entry name" value="BPTI_KUNITZ INHIBITOR DOMAIN-CONTAINING PROTEIN"/>
    <property type="match status" value="1"/>
</dbReference>
<dbReference type="PANTHER" id="PTHR10083">
    <property type="entry name" value="KUNITZ-TYPE PROTEASE INHIBITOR-RELATED"/>
    <property type="match status" value="1"/>
</dbReference>
<dbReference type="Pfam" id="PF00014">
    <property type="entry name" value="Kunitz_BPTI"/>
    <property type="match status" value="1"/>
</dbReference>
<dbReference type="PRINTS" id="PR00759">
    <property type="entry name" value="BASICPTASE"/>
</dbReference>
<dbReference type="SMART" id="SM00131">
    <property type="entry name" value="KU"/>
    <property type="match status" value="1"/>
</dbReference>
<dbReference type="SUPFAM" id="SSF57362">
    <property type="entry name" value="BPTI-like"/>
    <property type="match status" value="1"/>
</dbReference>
<dbReference type="PROSITE" id="PS50279">
    <property type="entry name" value="BPTI_KUNITZ_2"/>
    <property type="match status" value="1"/>
</dbReference>
<feature type="chain" id="PRO_0000418103" description="Kunitz-type serine protease inhibitor LmKTT-1c">
    <location>
        <begin position="1"/>
        <end position="59"/>
    </location>
</feature>
<feature type="domain" description="BPTI/Kunitz inhibitor" evidence="2">
    <location>
        <begin position="4"/>
        <end position="54"/>
    </location>
</feature>
<feature type="site" description="Interacts directly with the S1 pocket of trypsin" evidence="1">
    <location>
        <position position="14"/>
    </location>
</feature>
<feature type="disulfide bond" evidence="2">
    <location>
        <begin position="4"/>
        <end position="54"/>
    </location>
</feature>
<feature type="disulfide bond" evidence="2">
    <location>
        <begin position="29"/>
        <end position="50"/>
    </location>
</feature>
<feature type="disulfide bond" evidence="2">
    <location>
        <begin position="51"/>
        <end position="59"/>
    </location>
</feature>
<evidence type="ECO:0000250" key="1"/>
<evidence type="ECO:0000255" key="2">
    <source>
        <dbReference type="PROSITE-ProRule" id="PRU00031"/>
    </source>
</evidence>
<evidence type="ECO:0000269" key="3">
    <source>
    </source>
</evidence>
<evidence type="ECO:0000303" key="4">
    <source>
    </source>
</evidence>
<evidence type="ECO:0000305" key="5"/>
<evidence type="ECO:0000305" key="6">
    <source>
    </source>
</evidence>
<name>VKT23_LYCMC</name>
<reference key="1">
    <citation type="journal article" date="2012" name="J. Biol. Chem.">
        <title>Hg1, novel peptide inhibitor specific for Kv1.3 channels from first scorpion Kunitz-type potassium channel toxin family.</title>
        <authorList>
            <person name="Chen Z.-Y."/>
            <person name="Hu Y.T."/>
            <person name="Yang W.S."/>
            <person name="He Y.W."/>
            <person name="Feng J."/>
            <person name="Wang B."/>
            <person name="Zhao R.M."/>
            <person name="Ding J.P."/>
            <person name="Cao Z.-J."/>
            <person name="Li W.-X."/>
            <person name="Wu Y.-L."/>
        </authorList>
    </citation>
    <scope>NUCLEOTIDE SEQUENCE [MRNA]</scope>
    <scope>FUNCTION</scope>
    <scope>RECOMBINANT EXPRESSION</scope>
    <source>
        <tissue>Venom gland</tissue>
    </source>
</reference>
<accession>P0DJ48</accession>
<organism>
    <name type="scientific">Lychas mucronatus</name>
    <name type="common">Chinese swimming scorpion</name>
    <dbReference type="NCBI Taxonomy" id="172552"/>
    <lineage>
        <taxon>Eukaryota</taxon>
        <taxon>Metazoa</taxon>
        <taxon>Ecdysozoa</taxon>
        <taxon>Arthropoda</taxon>
        <taxon>Chelicerata</taxon>
        <taxon>Arachnida</taxon>
        <taxon>Scorpiones</taxon>
        <taxon>Buthida</taxon>
        <taxon>Buthoidea</taxon>
        <taxon>Buthidae</taxon>
        <taxon>Lychas</taxon>
    </lineage>
</organism>